<feature type="chain" id="PRO_0000391505" description="Uncharacterized 10 kDa protein">
    <location>
        <begin position="1"/>
        <end position="83"/>
    </location>
</feature>
<dbReference type="EMBL" id="AF525934">
    <property type="protein sequence ID" value="AAN60451.1"/>
    <property type="molecule type" value="Genomic_RNA"/>
</dbReference>
<dbReference type="Proteomes" id="UP000887520">
    <property type="component" value="Genome"/>
</dbReference>
<reference key="1">
    <citation type="journal article" date="2002" name="J. Gen. Virol.">
        <title>Nucleotide sequence and genomic organization of an ophiovirus associated with lettuce big-vein disease.</title>
        <authorList>
            <person name="Van Der Wilk F."/>
            <person name="Dullemans A.M."/>
            <person name="Verbeek M."/>
            <person name="Van Den Heuvel J.F.J.M."/>
        </authorList>
    </citation>
    <scope>NUCLEOTIDE SEQUENCE [GENOMIC RNA]</scope>
</reference>
<accession>Q8BCV7</accession>
<proteinExistence type="predicted"/>
<name>VG10_MILVL</name>
<protein>
    <recommendedName>
        <fullName>Uncharacterized 10 kDa protein</fullName>
    </recommendedName>
</protein>
<sequence>MEKLIPLVHLNDRTSFLSSRLLDVLLKHNTLLHYYQSHLPFKLYFKEIYYITLNIILRSFLEFNHTYSVIISLLVSPDFLNTM</sequence>
<organismHost>
    <name type="scientific">Lactuca sativa</name>
    <name type="common">Garden lettuce</name>
    <dbReference type="NCBI Taxonomy" id="4236"/>
</organismHost>
<organism>
    <name type="scientific">Mirafiori lettuce virus (isolate Lettuce/Netherlands/LS301-O)</name>
    <name type="common">MiLV</name>
    <name type="synonym">Mirafiori lettuce big-vein virus</name>
    <dbReference type="NCBI Taxonomy" id="652964"/>
    <lineage>
        <taxon>Viruses</taxon>
        <taxon>Riboviria</taxon>
        <taxon>Orthornavirae</taxon>
        <taxon>Negarnaviricota</taxon>
        <taxon>Haploviricotina</taxon>
        <taxon>Milneviricetes</taxon>
        <taxon>Serpentovirales</taxon>
        <taxon>Aspiviridae</taxon>
        <taxon>Ophiovirus</taxon>
        <taxon>Ophiovirus mirafioriense</taxon>
    </lineage>
</organism>